<gene>
    <name evidence="1" type="primary">btuB</name>
    <name type="ordered locus">EcHS_A4200</name>
</gene>
<evidence type="ECO:0000255" key="1">
    <source>
        <dbReference type="HAMAP-Rule" id="MF_01531"/>
    </source>
</evidence>
<evidence type="ECO:0000255" key="2">
    <source>
        <dbReference type="PROSITE-ProRule" id="PRU01360"/>
    </source>
</evidence>
<accession>A8A774</accession>
<name>BTUB_ECOHS</name>
<dbReference type="EMBL" id="CP000802">
    <property type="protein sequence ID" value="ABV08378.1"/>
    <property type="molecule type" value="Genomic_DNA"/>
</dbReference>
<dbReference type="RefSeq" id="WP_000591355.1">
    <property type="nucleotide sequence ID" value="NC_009800.1"/>
</dbReference>
<dbReference type="SMR" id="A8A774"/>
<dbReference type="KEGG" id="ecx:EcHS_A4200"/>
<dbReference type="HOGENOM" id="CLU_008287_18_5_6"/>
<dbReference type="GO" id="GO:0009279">
    <property type="term" value="C:cell outer membrane"/>
    <property type="evidence" value="ECO:0007669"/>
    <property type="project" value="UniProtKB-SubCell"/>
</dbReference>
<dbReference type="GO" id="GO:0046930">
    <property type="term" value="C:pore complex"/>
    <property type="evidence" value="ECO:0007669"/>
    <property type="project" value="UniProtKB-KW"/>
</dbReference>
<dbReference type="GO" id="GO:0015420">
    <property type="term" value="F:ABC-type vitamin B12 transporter activity"/>
    <property type="evidence" value="ECO:0007669"/>
    <property type="project" value="InterPro"/>
</dbReference>
<dbReference type="GO" id="GO:0046872">
    <property type="term" value="F:metal ion binding"/>
    <property type="evidence" value="ECO:0007669"/>
    <property type="project" value="UniProtKB-KW"/>
</dbReference>
<dbReference type="GO" id="GO:0015288">
    <property type="term" value="F:porin activity"/>
    <property type="evidence" value="ECO:0007669"/>
    <property type="project" value="UniProtKB-KW"/>
</dbReference>
<dbReference type="GO" id="GO:0006811">
    <property type="term" value="P:monoatomic ion transport"/>
    <property type="evidence" value="ECO:0007669"/>
    <property type="project" value="UniProtKB-KW"/>
</dbReference>
<dbReference type="CDD" id="cd01347">
    <property type="entry name" value="ligand_gated_channel"/>
    <property type="match status" value="1"/>
</dbReference>
<dbReference type="FunFam" id="2.170.130.10:FF:000002">
    <property type="entry name" value="Vitamin B12 transporter BtuB"/>
    <property type="match status" value="1"/>
</dbReference>
<dbReference type="FunFam" id="2.40.170.20:FF:000001">
    <property type="entry name" value="Vitamin B12 transporter BtuB"/>
    <property type="match status" value="1"/>
</dbReference>
<dbReference type="Gene3D" id="2.40.170.20">
    <property type="entry name" value="TonB-dependent receptor, beta-barrel domain"/>
    <property type="match status" value="1"/>
</dbReference>
<dbReference type="Gene3D" id="2.170.130.10">
    <property type="entry name" value="TonB-dependent receptor, plug domain"/>
    <property type="match status" value="1"/>
</dbReference>
<dbReference type="HAMAP" id="MF_01531">
    <property type="entry name" value="BtuB"/>
    <property type="match status" value="1"/>
</dbReference>
<dbReference type="InterPro" id="IPR010101">
    <property type="entry name" value="B12_transptr_BtuB"/>
</dbReference>
<dbReference type="InterPro" id="IPR012910">
    <property type="entry name" value="Plug_dom"/>
</dbReference>
<dbReference type="InterPro" id="IPR037066">
    <property type="entry name" value="Plug_dom_sf"/>
</dbReference>
<dbReference type="InterPro" id="IPR039426">
    <property type="entry name" value="TonB-dep_rcpt-like"/>
</dbReference>
<dbReference type="InterPro" id="IPR000531">
    <property type="entry name" value="TonB-dep_rcpt_b-brl"/>
</dbReference>
<dbReference type="InterPro" id="IPR010916">
    <property type="entry name" value="TonB_box_CS"/>
</dbReference>
<dbReference type="InterPro" id="IPR036942">
    <property type="entry name" value="TonB_rcpt_b-brl_sf"/>
</dbReference>
<dbReference type="InterPro" id="IPR010917">
    <property type="entry name" value="TonB_rcpt_CS"/>
</dbReference>
<dbReference type="NCBIfam" id="NF007926">
    <property type="entry name" value="PRK10641.1"/>
    <property type="match status" value="1"/>
</dbReference>
<dbReference type="NCBIfam" id="TIGR01779">
    <property type="entry name" value="TonB-B12"/>
    <property type="match status" value="1"/>
</dbReference>
<dbReference type="PANTHER" id="PTHR30069:SF53">
    <property type="entry name" value="COLICIN I RECEPTOR-RELATED"/>
    <property type="match status" value="1"/>
</dbReference>
<dbReference type="PANTHER" id="PTHR30069">
    <property type="entry name" value="TONB-DEPENDENT OUTER MEMBRANE RECEPTOR"/>
    <property type="match status" value="1"/>
</dbReference>
<dbReference type="Pfam" id="PF07715">
    <property type="entry name" value="Plug"/>
    <property type="match status" value="1"/>
</dbReference>
<dbReference type="Pfam" id="PF00593">
    <property type="entry name" value="TonB_dep_Rec_b-barrel"/>
    <property type="match status" value="1"/>
</dbReference>
<dbReference type="SUPFAM" id="SSF56935">
    <property type="entry name" value="Porins"/>
    <property type="match status" value="1"/>
</dbReference>
<dbReference type="PROSITE" id="PS00430">
    <property type="entry name" value="TONB_DEPENDENT_REC_1"/>
    <property type="match status" value="1"/>
</dbReference>
<dbReference type="PROSITE" id="PS01156">
    <property type="entry name" value="TONB_DEPENDENT_REC_2"/>
    <property type="match status" value="1"/>
</dbReference>
<dbReference type="PROSITE" id="PS52016">
    <property type="entry name" value="TONB_DEPENDENT_REC_3"/>
    <property type="match status" value="1"/>
</dbReference>
<feature type="signal peptide" evidence="1">
    <location>
        <begin position="1"/>
        <end position="20"/>
    </location>
</feature>
<feature type="chain" id="PRO_0000316879" description="Vitamin B12 transporter BtuB">
    <location>
        <begin position="21"/>
        <end position="614"/>
    </location>
</feature>
<feature type="transmembrane region" description="Beta stranded" evidence="1">
    <location>
        <begin position="158"/>
        <end position="165"/>
    </location>
</feature>
<feature type="transmembrane region" description="Beta stranded" evidence="1">
    <location>
        <begin position="169"/>
        <end position="178"/>
    </location>
</feature>
<feature type="transmembrane region" description="Beta stranded" evidence="1">
    <location>
        <begin position="184"/>
        <end position="195"/>
    </location>
</feature>
<feature type="transmembrane region" description="Beta stranded" evidence="1">
    <location>
        <begin position="217"/>
        <end position="227"/>
    </location>
</feature>
<feature type="transmembrane region" description="Beta stranded" evidence="1">
    <location>
        <begin position="232"/>
        <end position="248"/>
    </location>
</feature>
<feature type="transmembrane region" description="Beta stranded" evidence="1">
    <location>
        <begin position="263"/>
        <end position="277"/>
    </location>
</feature>
<feature type="transmembrane region" description="Beta stranded" evidence="1">
    <location>
        <begin position="279"/>
        <end position="296"/>
    </location>
</feature>
<feature type="transmembrane region" description="Beta stranded" evidence="1">
    <location>
        <begin position="309"/>
        <end position="325"/>
    </location>
</feature>
<feature type="transmembrane region" description="Beta stranded" evidence="1">
    <location>
        <begin position="328"/>
        <end position="337"/>
    </location>
</feature>
<feature type="transmembrane region" description="Beta stranded" evidence="1">
    <location>
        <begin position="353"/>
        <end position="369"/>
    </location>
</feature>
<feature type="transmembrane region" description="Beta stranded" evidence="1">
    <location>
        <begin position="371"/>
        <end position="381"/>
    </location>
</feature>
<feature type="transmembrane region" description="Beta stranded" evidence="1">
    <location>
        <begin position="385"/>
        <end position="400"/>
    </location>
</feature>
<feature type="transmembrane region" description="Beta stranded" evidence="1">
    <location>
        <begin position="403"/>
        <end position="417"/>
    </location>
</feature>
<feature type="transmembrane region" description="Beta stranded" evidence="1">
    <location>
        <begin position="434"/>
        <end position="443"/>
    </location>
</feature>
<feature type="transmembrane region" description="Beta stranded" evidence="1">
    <location>
        <begin position="449"/>
        <end position="458"/>
    </location>
</feature>
<feature type="transmembrane region" description="Beta stranded" evidence="1">
    <location>
        <begin position="473"/>
        <end position="490"/>
    </location>
</feature>
<feature type="transmembrane region" description="Beta stranded" evidence="1">
    <location>
        <begin position="494"/>
        <end position="509"/>
    </location>
</feature>
<feature type="transmembrane region" description="Beta stranded" evidence="1">
    <location>
        <begin position="517"/>
        <end position="529"/>
    </location>
</feature>
<feature type="transmembrane region" description="Beta stranded" evidence="1">
    <location>
        <begin position="535"/>
        <end position="550"/>
    </location>
</feature>
<feature type="transmembrane region" description="Beta stranded" evidence="1">
    <location>
        <begin position="558"/>
        <end position="572"/>
    </location>
</feature>
<feature type="transmembrane region" description="Beta stranded" evidence="1">
    <location>
        <begin position="585"/>
        <end position="596"/>
    </location>
</feature>
<feature type="transmembrane region" description="Beta stranded" evidence="1">
    <location>
        <begin position="602"/>
        <end position="614"/>
    </location>
</feature>
<feature type="domain" description="TBDR plug" evidence="2">
    <location>
        <begin position="38"/>
        <end position="152"/>
    </location>
</feature>
<feature type="domain" description="TBDR beta-barrel" evidence="2">
    <location>
        <begin position="155"/>
        <end position="614"/>
    </location>
</feature>
<feature type="short sequence motif" description="TonB box">
    <location>
        <begin position="26"/>
        <end position="33"/>
    </location>
</feature>
<feature type="short sequence motif" description="TonB C-terminal box">
    <location>
        <begin position="597"/>
        <end position="614"/>
    </location>
</feature>
<feature type="binding site" evidence="1">
    <location>
        <position position="83"/>
    </location>
    <ligand>
        <name>cyanocob(III)alamin</name>
        <dbReference type="ChEBI" id="CHEBI:17439"/>
    </ligand>
</feature>
<feature type="binding site" evidence="1">
    <location>
        <position position="85"/>
    </location>
    <ligand>
        <name>cyanocob(III)alamin</name>
        <dbReference type="ChEBI" id="CHEBI:17439"/>
    </ligand>
</feature>
<feature type="binding site" evidence="1">
    <location>
        <position position="92"/>
    </location>
    <ligand>
        <name>cyanocob(III)alamin</name>
        <dbReference type="ChEBI" id="CHEBI:17439"/>
    </ligand>
</feature>
<feature type="binding site" evidence="1">
    <location>
        <begin position="110"/>
        <end position="111"/>
    </location>
    <ligand>
        <name>cyanocob(III)alamin</name>
        <dbReference type="ChEBI" id="CHEBI:17439"/>
    </ligand>
</feature>
<feature type="binding site" evidence="1">
    <location>
        <position position="199"/>
    </location>
    <ligand>
        <name>Ca(2+)</name>
        <dbReference type="ChEBI" id="CHEBI:29108"/>
        <label>1</label>
    </ligand>
</feature>
<feature type="binding site" evidence="1">
    <location>
        <position position="211"/>
    </location>
    <ligand>
        <name>Ca(2+)</name>
        <dbReference type="ChEBI" id="CHEBI:29108"/>
        <label>1</label>
    </ligand>
</feature>
<feature type="binding site" evidence="1">
    <location>
        <position position="213"/>
    </location>
    <ligand>
        <name>Ca(2+)</name>
        <dbReference type="ChEBI" id="CHEBI:29108"/>
        <label>1</label>
    </ligand>
</feature>
<feature type="binding site" evidence="1">
    <location>
        <position position="213"/>
    </location>
    <ligand>
        <name>Ca(2+)</name>
        <dbReference type="ChEBI" id="CHEBI:29108"/>
        <label>2</label>
    </ligand>
</feature>
<feature type="binding site" evidence="1">
    <location>
        <position position="215"/>
    </location>
    <ligand>
        <name>Ca(2+)</name>
        <dbReference type="ChEBI" id="CHEBI:29108"/>
        <label>1</label>
    </ligand>
</feature>
<feature type="binding site" evidence="1">
    <location>
        <position position="215"/>
    </location>
    <ligand>
        <name>Ca(2+)</name>
        <dbReference type="ChEBI" id="CHEBI:29108"/>
        <label>2</label>
    </ligand>
</feature>
<feature type="binding site" evidence="1">
    <location>
        <position position="249"/>
    </location>
    <ligand>
        <name>Ca(2+)</name>
        <dbReference type="ChEBI" id="CHEBI:29108"/>
        <label>2</label>
    </ligand>
</feature>
<feature type="binding site" evidence="1">
    <location>
        <position position="250"/>
    </location>
    <ligand>
        <name>Ca(2+)</name>
        <dbReference type="ChEBI" id="CHEBI:29108"/>
        <label>1</label>
    </ligand>
</feature>
<feature type="binding site" evidence="1">
    <location>
        <position position="250"/>
    </location>
    <ligand>
        <name>Ca(2+)</name>
        <dbReference type="ChEBI" id="CHEBI:29108"/>
        <label>2</label>
    </ligand>
</feature>
<feature type="binding site" evidence="1">
    <location>
        <position position="251"/>
    </location>
    <ligand>
        <name>cyanocob(III)alamin</name>
        <dbReference type="ChEBI" id="CHEBI:17439"/>
    </ligand>
</feature>
<feature type="binding site" evidence="1">
    <location>
        <position position="261"/>
    </location>
    <ligand>
        <name>Ca(2+)</name>
        <dbReference type="ChEBI" id="CHEBI:29108"/>
        <label>2</label>
    </ligand>
</feature>
<feature type="binding site" evidence="1">
    <location>
        <position position="309"/>
    </location>
    <ligand>
        <name>cyanocob(III)alamin</name>
        <dbReference type="ChEBI" id="CHEBI:17439"/>
    </ligand>
</feature>
<feature type="binding site" evidence="1">
    <location>
        <position position="517"/>
    </location>
    <ligand>
        <name>cyanocob(III)alamin</name>
        <dbReference type="ChEBI" id="CHEBI:17439"/>
    </ligand>
</feature>
<feature type="binding site" evidence="1">
    <location>
        <position position="551"/>
    </location>
    <ligand>
        <name>cyanocob(III)alamin</name>
        <dbReference type="ChEBI" id="CHEBI:17439"/>
    </ligand>
</feature>
<organism>
    <name type="scientific">Escherichia coli O9:H4 (strain HS)</name>
    <dbReference type="NCBI Taxonomy" id="331112"/>
    <lineage>
        <taxon>Bacteria</taxon>
        <taxon>Pseudomonadati</taxon>
        <taxon>Pseudomonadota</taxon>
        <taxon>Gammaproteobacteria</taxon>
        <taxon>Enterobacterales</taxon>
        <taxon>Enterobacteriaceae</taxon>
        <taxon>Escherichia</taxon>
    </lineage>
</organism>
<keyword id="KW-0106">Calcium</keyword>
<keyword id="KW-0998">Cell outer membrane</keyword>
<keyword id="KW-0406">Ion transport</keyword>
<keyword id="KW-0472">Membrane</keyword>
<keyword id="KW-0479">Metal-binding</keyword>
<keyword id="KW-0626">Porin</keyword>
<keyword id="KW-0732">Signal</keyword>
<keyword id="KW-0798">TonB box</keyword>
<keyword id="KW-0812">Transmembrane</keyword>
<keyword id="KW-1134">Transmembrane beta strand</keyword>
<keyword id="KW-0813">Transport</keyword>
<sequence>MIKKASLLTACSVTAFSAWAQDTSPDTLVVTANRFEQPRSTVLAPTTVVTRQDIDRWQSTSVNDVLRRLPGVDITQNGGSGQLSSIFIRGTNASHVLVLIDGVRLNLAGVSGSADLSQFPIALVQRVEYIRGPRSAVYGSDAIGGVVNIITTRDEPGTEISAGWGSNSYQNYDVSTQQQLGDKTRVTLLGDYAHTHGYDVVAYGNTGTQAQTDNDGFLSKTLYGALEHNFTDAWSGFVRGYGYDNRTNYDAYYSPGSPLLDTRKLYSQSWDAGLRYNGELIKSQLITSYSHSKDYNYDPHFGRYDSSATLDEMKQYTVQWANNVIVGHGSIGAGVDWQKQTTTPGTGYVENGYDQRNTGIYLTGLQQVGDFTFEGAARSDDNSQFGRHGTWQTSAGWEFIEGYRFIASYGTSYKAPNLGQLYGFYGNPNLDPEKSKQWEGAFEGLTAGVNWRISGYRNDVSDLIDYDDHTLKYYNEGKARIKGVEATANFDTGPLTHTVSYDYVDARNAITDTPLLRRAKQQVKYQLDWQLYDFDWGITYQYLGTRYDKDYSSYPYQTVKMGGVSLWDLAVAYPVTSHLTVRGKIANLFDKDYETVYGYQTAGREYTLSGSYTF</sequence>
<comment type="function">
    <text evidence="1">Involved in the active translocation of vitamin B12 (cyanocobalamin) across the outer membrane to the periplasmic space. It derives its energy for transport by interacting with the trans-periplasmic membrane protein TonB.</text>
</comment>
<comment type="subcellular location">
    <subcellularLocation>
        <location evidence="1">Cell outer membrane</location>
        <topology evidence="1">Multi-pass membrane protein</topology>
    </subcellularLocation>
</comment>
<comment type="similarity">
    <text evidence="1">Belongs to the TonB-dependent receptor family. BtuB (TC 1.B.14.3.1) subfamily.</text>
</comment>
<reference key="1">
    <citation type="journal article" date="2008" name="J. Bacteriol.">
        <title>The pangenome structure of Escherichia coli: comparative genomic analysis of E. coli commensal and pathogenic isolates.</title>
        <authorList>
            <person name="Rasko D.A."/>
            <person name="Rosovitz M.J."/>
            <person name="Myers G.S.A."/>
            <person name="Mongodin E.F."/>
            <person name="Fricke W.F."/>
            <person name="Gajer P."/>
            <person name="Crabtree J."/>
            <person name="Sebaihia M."/>
            <person name="Thomson N.R."/>
            <person name="Chaudhuri R."/>
            <person name="Henderson I.R."/>
            <person name="Sperandio V."/>
            <person name="Ravel J."/>
        </authorList>
    </citation>
    <scope>NUCLEOTIDE SEQUENCE [LARGE SCALE GENOMIC DNA]</scope>
    <source>
        <strain>HS</strain>
    </source>
</reference>
<protein>
    <recommendedName>
        <fullName evidence="1">Vitamin B12 transporter BtuB</fullName>
    </recommendedName>
    <alternativeName>
        <fullName evidence="1">Cobalamin receptor</fullName>
    </alternativeName>
    <alternativeName>
        <fullName evidence="1">Outer membrane cobalamin translocator</fullName>
    </alternativeName>
</protein>
<proteinExistence type="inferred from homology"/>